<reference key="1">
    <citation type="journal article" date="2003" name="Genomics">
        <title>Identification of eight members of the Argonaute family in the human genome.</title>
        <authorList>
            <person name="Sasaki T."/>
            <person name="Shiohama A."/>
            <person name="Minoshima S."/>
            <person name="Shimizu N."/>
        </authorList>
    </citation>
    <scope>NUCLEOTIDE SEQUENCE [MRNA] (ISOFORM 1)</scope>
</reference>
<reference key="2">
    <citation type="submission" date="2010-11" db="EMBL/GenBank/DDBJ databases">
        <title>Identification of piwil2-like (PL2L106) protein in HeLa cells.</title>
        <authorList>
            <person name="Zhang K."/>
            <person name="Lu Y."/>
            <person name="Li C."/>
        </authorList>
    </citation>
    <scope>NUCLEOTIDE SEQUENCE [MRNA] (ISOFORM 2)</scope>
</reference>
<reference key="3">
    <citation type="journal article" date="2004" name="Nat. Genet.">
        <title>Complete sequencing and characterization of 21,243 full-length human cDNAs.</title>
        <authorList>
            <person name="Ota T."/>
            <person name="Suzuki Y."/>
            <person name="Nishikawa T."/>
            <person name="Otsuki T."/>
            <person name="Sugiyama T."/>
            <person name="Irie R."/>
            <person name="Wakamatsu A."/>
            <person name="Hayashi K."/>
            <person name="Sato H."/>
            <person name="Nagai K."/>
            <person name="Kimura K."/>
            <person name="Makita H."/>
            <person name="Sekine M."/>
            <person name="Obayashi M."/>
            <person name="Nishi T."/>
            <person name="Shibahara T."/>
            <person name="Tanaka T."/>
            <person name="Ishii S."/>
            <person name="Yamamoto J."/>
            <person name="Saito K."/>
            <person name="Kawai Y."/>
            <person name="Isono Y."/>
            <person name="Nakamura Y."/>
            <person name="Nagahari K."/>
            <person name="Murakami K."/>
            <person name="Yasuda T."/>
            <person name="Iwayanagi T."/>
            <person name="Wagatsuma M."/>
            <person name="Shiratori A."/>
            <person name="Sudo H."/>
            <person name="Hosoiri T."/>
            <person name="Kaku Y."/>
            <person name="Kodaira H."/>
            <person name="Kondo H."/>
            <person name="Sugawara M."/>
            <person name="Takahashi M."/>
            <person name="Kanda K."/>
            <person name="Yokoi T."/>
            <person name="Furuya T."/>
            <person name="Kikkawa E."/>
            <person name="Omura Y."/>
            <person name="Abe K."/>
            <person name="Kamihara K."/>
            <person name="Katsuta N."/>
            <person name="Sato K."/>
            <person name="Tanikawa M."/>
            <person name="Yamazaki M."/>
            <person name="Ninomiya K."/>
            <person name="Ishibashi T."/>
            <person name="Yamashita H."/>
            <person name="Murakawa K."/>
            <person name="Fujimori K."/>
            <person name="Tanai H."/>
            <person name="Kimata M."/>
            <person name="Watanabe M."/>
            <person name="Hiraoka S."/>
            <person name="Chiba Y."/>
            <person name="Ishida S."/>
            <person name="Ono Y."/>
            <person name="Takiguchi S."/>
            <person name="Watanabe S."/>
            <person name="Yosida M."/>
            <person name="Hotuta T."/>
            <person name="Kusano J."/>
            <person name="Kanehori K."/>
            <person name="Takahashi-Fujii A."/>
            <person name="Hara H."/>
            <person name="Tanase T.-O."/>
            <person name="Nomura Y."/>
            <person name="Togiya S."/>
            <person name="Komai F."/>
            <person name="Hara R."/>
            <person name="Takeuchi K."/>
            <person name="Arita M."/>
            <person name="Imose N."/>
            <person name="Musashino K."/>
            <person name="Yuuki H."/>
            <person name="Oshima A."/>
            <person name="Sasaki N."/>
            <person name="Aotsuka S."/>
            <person name="Yoshikawa Y."/>
            <person name="Matsunawa H."/>
            <person name="Ichihara T."/>
            <person name="Shiohata N."/>
            <person name="Sano S."/>
            <person name="Moriya S."/>
            <person name="Momiyama H."/>
            <person name="Satoh N."/>
            <person name="Takami S."/>
            <person name="Terashima Y."/>
            <person name="Suzuki O."/>
            <person name="Nakagawa S."/>
            <person name="Senoh A."/>
            <person name="Mizoguchi H."/>
            <person name="Goto Y."/>
            <person name="Shimizu F."/>
            <person name="Wakebe H."/>
            <person name="Hishigaki H."/>
            <person name="Watanabe T."/>
            <person name="Sugiyama A."/>
            <person name="Takemoto M."/>
            <person name="Kawakami B."/>
            <person name="Yamazaki M."/>
            <person name="Watanabe K."/>
            <person name="Kumagai A."/>
            <person name="Itakura S."/>
            <person name="Fukuzumi Y."/>
            <person name="Fujimori Y."/>
            <person name="Komiyama M."/>
            <person name="Tashiro H."/>
            <person name="Tanigami A."/>
            <person name="Fujiwara T."/>
            <person name="Ono T."/>
            <person name="Yamada K."/>
            <person name="Fujii Y."/>
            <person name="Ozaki K."/>
            <person name="Hirao M."/>
            <person name="Ohmori Y."/>
            <person name="Kawabata A."/>
            <person name="Hikiji T."/>
            <person name="Kobatake N."/>
            <person name="Inagaki H."/>
            <person name="Ikema Y."/>
            <person name="Okamoto S."/>
            <person name="Okitani R."/>
            <person name="Kawakami T."/>
            <person name="Noguchi S."/>
            <person name="Itoh T."/>
            <person name="Shigeta K."/>
            <person name="Senba T."/>
            <person name="Matsumura K."/>
            <person name="Nakajima Y."/>
            <person name="Mizuno T."/>
            <person name="Morinaga M."/>
            <person name="Sasaki M."/>
            <person name="Togashi T."/>
            <person name="Oyama M."/>
            <person name="Hata H."/>
            <person name="Watanabe M."/>
            <person name="Komatsu T."/>
            <person name="Mizushima-Sugano J."/>
            <person name="Satoh T."/>
            <person name="Shirai Y."/>
            <person name="Takahashi Y."/>
            <person name="Nakagawa K."/>
            <person name="Okumura K."/>
            <person name="Nagase T."/>
            <person name="Nomura N."/>
            <person name="Kikuchi H."/>
            <person name="Masuho Y."/>
            <person name="Yamashita R."/>
            <person name="Nakai K."/>
            <person name="Yada T."/>
            <person name="Nakamura Y."/>
            <person name="Ohara O."/>
            <person name="Isogai T."/>
            <person name="Sugano S."/>
        </authorList>
    </citation>
    <scope>NUCLEOTIDE SEQUENCE [LARGE SCALE MRNA] (ISOFORMS 1 AND 2)</scope>
    <source>
        <tissue>Testis</tissue>
    </source>
</reference>
<reference key="4">
    <citation type="journal article" date="2004" name="Genome Res.">
        <title>The status, quality, and expansion of the NIH full-length cDNA project: the Mammalian Gene Collection (MGC).</title>
        <authorList>
            <consortium name="The MGC Project Team"/>
        </authorList>
    </citation>
    <scope>NUCLEOTIDE SEQUENCE [LARGE SCALE MRNA] (ISOFORM 1)</scope>
    <source>
        <tissue>Testis</tissue>
    </source>
</reference>
<reference key="5">
    <citation type="journal article" date="2006" name="Hum. Mol. Genet.">
        <title>Stem-cell protein Piwil2 is widely expressed in tumors and inhibits apoptosis through activation of Stat3/Bcl-XL pathway.</title>
        <authorList>
            <person name="Lee J.H."/>
            <person name="Schutte D."/>
            <person name="Wulf G."/>
            <person name="Fuzesi L."/>
            <person name="Radzun H.-J."/>
            <person name="Schweyer S."/>
            <person name="Engel W."/>
            <person name="Nayernia K."/>
        </authorList>
    </citation>
    <scope>FUNCTION</scope>
    <scope>TISSUE SPECIFICITY</scope>
</reference>
<reference key="6">
    <citation type="journal article" date="2017" name="Oncotarget">
        <title>Cancer/testis antigen PIWIL2 suppresses circadian rhythms by regulating the stability and activity of BMAL1 and CLOCK.</title>
        <authorList>
            <person name="Lu Y."/>
            <person name="Zheng X."/>
            <person name="Hu W."/>
            <person name="Bian S."/>
            <person name="Zhang Z."/>
            <person name="Tao D."/>
            <person name="Liu Y."/>
            <person name="Ma Y."/>
        </authorList>
    </citation>
    <scope>FUNCTION</scope>
    <scope>INTERACTION WITH BMAL1 AND CLOCK</scope>
</reference>
<reference key="7">
    <citation type="journal article" date="2011" name="Proc. Natl. Acad. Sci. U.S.A.">
        <title>Structural basis for piRNA 2'-O-methylated 3'-end recognition by Piwi PAZ (Piwi/Argonaute/Zwille) domains.</title>
        <authorList>
            <person name="Tian Y."/>
            <person name="Simanshu D.K."/>
            <person name="Ma J.B."/>
            <person name="Patel D.J."/>
        </authorList>
    </citation>
    <scope>X-RAY CRYSTALLOGRAPHY (2.92 ANGSTROMS) OF 387-525</scope>
    <scope>RNA-BINDING</scope>
</reference>
<sequence length="973" mass="109849">MDPFRPSFRGQSPIHPSQCQAVRMPGCWPQASKPLDPALGRGAPAGRGHVFGKPEEPSTQRGPAQRESVGLVSMFRGLGIETVSKTPLKREMLPSGRGILGRGLSANLVRKDREELSPTFWDPKVLAAGDSKMAETSVGWSRTLGRGSSDASLLPLGRAAGGISREVDKPPCTFSTPSRGPPQLSSPPALPQSPLHSPDRPLVLTVEHKEKELIVKQGSKGTPQSLGLNLVKIQCHNEAVYQYHVTFSPNVECKSMRFGMLKDHQAVTGNVTAFDGSILYLPVKLQQVLELKSQRKTDSAEISIKIQMTKILEPCSDLCIPFYNVVFRRVMKLLDMKLVGRNFYDPTSAMVLQQHRLQIWPGYAASIRRTDGGLFLLADVSHKVIRNDCVLDVMHAIYQQNKEHFQDECTKLLVGNIVITRYNNRTYRIDDVDWNKTPKDSFTMSDGKEITFLEYYSKNYGITVKEEDQPLLIHRPSERQDNHGMLLKGEILLLPELSFMTGIPEKMKKDFRAMKDLAQQINLSPKQHHSALECLLQRIAKNEAATNELMRWGLRLQKDVHKIEGRVLPMERINLKNTSFITSQELNWVKEVTRDPSILTIPMHFWALFYPKRAMDQARELVNMLEKIAGPIGMRMSPPAWVELKDDRIETYVRTIQSTLGAEGKIQMVVCIIMGPRDDLYGAIKKLCCVQSPVPSQVVNVRTIGQPTRLRSVAQKILLQINCKLGGELWGVDIPLKQLMVIGMDVYHDPSRGMRSVVGFVASINLTLTKWYSRVVFQMPHQEIVDSLKLCLVGSLKKFYEVNHCLPEKIVVYRDGVSDGQLKTVANYEIPQLQKCFEAFENYQPKMVVFVVQKKISTNLYLAAPQNFVTPTPGTVVDHTITSCEWVDFYLLAHHVRQGCGIPTHYVCVLNTANLSPDHMQRLTFKLCHMYWNWPGTIRVPAPCKYAHKLAFLSGHILHHEPAIQLCENLFFL</sequence>
<feature type="chain" id="PRO_0000234569" description="Piwi-like protein 2">
    <location>
        <begin position="1"/>
        <end position="973"/>
    </location>
</feature>
<feature type="domain" description="PAZ" evidence="4">
    <location>
        <begin position="389"/>
        <end position="502"/>
    </location>
</feature>
<feature type="domain" description="Piwi" evidence="5">
    <location>
        <begin position="668"/>
        <end position="959"/>
    </location>
</feature>
<feature type="region of interest" description="Disordered" evidence="6">
    <location>
        <begin position="28"/>
        <end position="65"/>
    </location>
</feature>
<feature type="region of interest" description="Disordered" evidence="6">
    <location>
        <begin position="162"/>
        <end position="199"/>
    </location>
</feature>
<feature type="compositionally biased region" description="Low complexity" evidence="6">
    <location>
        <begin position="34"/>
        <end position="48"/>
    </location>
</feature>
<feature type="active site" evidence="1">
    <location>
        <position position="745"/>
    </location>
</feature>
<feature type="active site" evidence="1">
    <location>
        <position position="783"/>
    </location>
</feature>
<feature type="active site" evidence="1">
    <location>
        <position position="815"/>
    </location>
</feature>
<feature type="active site" evidence="1">
    <location>
        <position position="948"/>
    </location>
</feature>
<feature type="modified residue" description="Symmetric dimethylarginine" evidence="2">
    <location>
        <position position="47"/>
    </location>
</feature>
<feature type="modified residue" description="Omega-N-methylarginine; by PRMT5; alternate" evidence="2">
    <location>
        <position position="76"/>
    </location>
</feature>
<feature type="modified residue" description="Symmetric dimethylarginine; by PRMT5; alternate" evidence="2">
    <location>
        <position position="76"/>
    </location>
</feature>
<feature type="modified residue" description="Omega-N-methylarginine; by PRMT5; alternate" evidence="2">
    <location>
        <position position="97"/>
    </location>
</feature>
<feature type="modified residue" description="Symmetric dimethylarginine; alternate" evidence="2">
    <location>
        <position position="97"/>
    </location>
</feature>
<feature type="modified residue" description="Omega-N-methylarginine; alternate" evidence="2">
    <location>
        <position position="102"/>
    </location>
</feature>
<feature type="modified residue" description="Symmetric dimethylarginine; by PRMT5; alternate" evidence="2">
    <location>
        <position position="102"/>
    </location>
</feature>
<feature type="modified residue" description="Symmetric dimethylarginine" evidence="2">
    <location>
        <position position="146"/>
    </location>
</feature>
<feature type="modified residue" description="Symmetric dimethylarginine" evidence="2">
    <location>
        <position position="158"/>
    </location>
</feature>
<feature type="modified residue" description="Symmetric dimethylarginine; by PRMT5" evidence="2">
    <location>
        <position position="165"/>
    </location>
</feature>
<feature type="modified residue" description="Symmetric dimethylarginine; by PRMT5" evidence="2">
    <location>
        <position position="551"/>
    </location>
</feature>
<feature type="splice variant" id="VSP_036664" description="In isoform 2." evidence="9 10">
    <location>
        <begin position="887"/>
        <end position="922"/>
    </location>
</feature>
<feature type="sequence conflict" description="In Ref. 3; BAG61134." evidence="11" ref="3">
    <original>Q</original>
    <variation>R</variation>
    <location>
        <position position="18"/>
    </location>
</feature>
<feature type="sequence conflict" description="In Ref. 3; BAF98721." evidence="11" ref="3">
    <original>I</original>
    <variation>T</variation>
    <location>
        <position position="581"/>
    </location>
</feature>
<feature type="sequence conflict" description="In Ref. 3; BAA91558." evidence="11" ref="3">
    <original>K</original>
    <variation>N</variation>
    <location>
        <position position="685"/>
    </location>
</feature>
<feature type="sequence conflict" description="In Ref. 3; BAF98724." evidence="11" ref="3">
    <original>Q</original>
    <variation>R</variation>
    <location>
        <position position="720"/>
    </location>
</feature>
<feature type="sequence conflict" description="In Ref. 3; BAF83727." evidence="11" ref="3">
    <original>V</original>
    <variation>G</variation>
    <location>
        <position position="887"/>
    </location>
</feature>
<feature type="sequence conflict" description="In Ref. 3; BAB55155." evidence="11" ref="3">
    <original>E</original>
    <variation>G</variation>
    <location>
        <position position="961"/>
    </location>
</feature>
<feature type="strand" evidence="14">
    <location>
        <begin position="221"/>
        <end position="235"/>
    </location>
</feature>
<feature type="strand" evidence="14">
    <location>
        <begin position="240"/>
        <end position="249"/>
    </location>
</feature>
<feature type="helix" evidence="14">
    <location>
        <begin position="254"/>
        <end position="263"/>
    </location>
</feature>
<feature type="helix" evidence="14">
    <location>
        <begin position="265"/>
        <end position="268"/>
    </location>
</feature>
<feature type="strand" evidence="14">
    <location>
        <begin position="276"/>
        <end position="283"/>
    </location>
</feature>
<feature type="strand" evidence="14">
    <location>
        <begin position="289"/>
        <end position="294"/>
    </location>
</feature>
<feature type="turn" evidence="14">
    <location>
        <begin position="296"/>
        <end position="298"/>
    </location>
</feature>
<feature type="strand" evidence="14">
    <location>
        <begin position="300"/>
        <end position="312"/>
    </location>
</feature>
<feature type="helix" evidence="14">
    <location>
        <begin position="319"/>
        <end position="333"/>
    </location>
</feature>
<feature type="strand" evidence="14">
    <location>
        <begin position="340"/>
        <end position="344"/>
    </location>
</feature>
<feature type="strand" evidence="14">
    <location>
        <begin position="350"/>
        <end position="352"/>
    </location>
</feature>
<feature type="turn" evidence="14">
    <location>
        <begin position="353"/>
        <end position="356"/>
    </location>
</feature>
<feature type="strand" evidence="14">
    <location>
        <begin position="357"/>
        <end position="369"/>
    </location>
</feature>
<feature type="strand" evidence="14">
    <location>
        <begin position="371"/>
        <end position="388"/>
    </location>
</feature>
<feature type="helix" evidence="13">
    <location>
        <begin position="390"/>
        <end position="413"/>
    </location>
</feature>
<feature type="strand" evidence="13">
    <location>
        <begin position="417"/>
        <end position="420"/>
    </location>
</feature>
<feature type="turn" evidence="13">
    <location>
        <begin position="421"/>
        <end position="423"/>
    </location>
</feature>
<feature type="strand" evidence="13">
    <location>
        <begin position="426"/>
        <end position="428"/>
    </location>
</feature>
<feature type="strand" evidence="13">
    <location>
        <begin position="431"/>
        <end position="433"/>
    </location>
</feature>
<feature type="strand" evidence="13">
    <location>
        <begin position="440"/>
        <end position="443"/>
    </location>
</feature>
<feature type="strand" evidence="13">
    <location>
        <begin position="449"/>
        <end position="451"/>
    </location>
</feature>
<feature type="helix" evidence="13">
    <location>
        <begin position="452"/>
        <end position="460"/>
    </location>
</feature>
<feature type="strand" evidence="13">
    <location>
        <begin position="471"/>
        <end position="474"/>
    </location>
</feature>
<feature type="strand" evidence="12">
    <location>
        <begin position="477"/>
        <end position="480"/>
    </location>
</feature>
<feature type="strand" evidence="12">
    <location>
        <begin position="482"/>
        <end position="485"/>
    </location>
</feature>
<feature type="strand" evidence="13">
    <location>
        <begin position="491"/>
        <end position="493"/>
    </location>
</feature>
<feature type="helix" evidence="13">
    <location>
        <begin position="495"/>
        <end position="497"/>
    </location>
</feature>
<feature type="strand" evidence="14">
    <location>
        <begin position="499"/>
        <end position="502"/>
    </location>
</feature>
<feature type="helix" evidence="14">
    <location>
        <begin position="505"/>
        <end position="509"/>
    </location>
</feature>
<feature type="helix" evidence="14">
    <location>
        <begin position="511"/>
        <end position="521"/>
    </location>
</feature>
<feature type="helix" evidence="14">
    <location>
        <begin position="525"/>
        <end position="541"/>
    </location>
</feature>
<feature type="helix" evidence="14">
    <location>
        <begin position="543"/>
        <end position="552"/>
    </location>
</feature>
<feature type="strand" evidence="14">
    <location>
        <begin position="554"/>
        <end position="556"/>
    </location>
</feature>
<feature type="strand" evidence="14">
    <location>
        <begin position="562"/>
        <end position="567"/>
    </location>
</feature>
<feature type="strand" evidence="14">
    <location>
        <begin position="572"/>
        <end position="574"/>
    </location>
</feature>
<feature type="strand" evidence="14">
    <location>
        <begin position="579"/>
        <end position="581"/>
    </location>
</feature>
<feature type="helix" evidence="14">
    <location>
        <begin position="589"/>
        <end position="594"/>
    </location>
</feature>
<feature type="strand" evidence="14">
    <location>
        <begin position="607"/>
        <end position="612"/>
    </location>
</feature>
<feature type="helix" evidence="14">
    <location>
        <begin position="615"/>
        <end position="632"/>
    </location>
</feature>
<feature type="strand" evidence="14">
    <location>
        <begin position="640"/>
        <end position="644"/>
    </location>
</feature>
<feature type="helix" evidence="14">
    <location>
        <begin position="649"/>
        <end position="662"/>
    </location>
</feature>
<feature type="strand" evidence="14">
    <location>
        <begin position="669"/>
        <end position="673"/>
    </location>
</feature>
<feature type="helix" evidence="14">
    <location>
        <begin position="678"/>
        <end position="689"/>
    </location>
</feature>
<feature type="strand" evidence="14">
    <location>
        <begin position="696"/>
        <end position="700"/>
    </location>
</feature>
<feature type="helix" evidence="14">
    <location>
        <begin position="701"/>
        <end position="705"/>
    </location>
</feature>
<feature type="helix" evidence="14">
    <location>
        <begin position="710"/>
        <end position="724"/>
    </location>
</feature>
<feature type="strand" evidence="14">
    <location>
        <begin position="736"/>
        <end position="747"/>
    </location>
</feature>
<feature type="strand" evidence="14">
    <location>
        <begin position="757"/>
        <end position="763"/>
    </location>
</feature>
<feature type="strand" evidence="14">
    <location>
        <begin position="771"/>
        <end position="777"/>
    </location>
</feature>
<feature type="strand" evidence="14">
    <location>
        <begin position="780"/>
        <end position="782"/>
    </location>
</feature>
<feature type="helix" evidence="14">
    <location>
        <begin position="784"/>
        <end position="803"/>
    </location>
</feature>
<feature type="strand" evidence="14">
    <location>
        <begin position="808"/>
        <end position="814"/>
    </location>
</feature>
<feature type="helix" evidence="14">
    <location>
        <begin position="822"/>
        <end position="827"/>
    </location>
</feature>
<feature type="helix" evidence="14">
    <location>
        <begin position="829"/>
        <end position="834"/>
    </location>
</feature>
<feature type="helix" evidence="14">
    <location>
        <begin position="835"/>
        <end position="838"/>
    </location>
</feature>
<feature type="strand" evidence="14">
    <location>
        <begin position="846"/>
        <end position="854"/>
    </location>
</feature>
<feature type="strand" evidence="14">
    <location>
        <begin position="860"/>
        <end position="863"/>
    </location>
</feature>
<feature type="strand" evidence="14">
    <location>
        <begin position="865"/>
        <end position="869"/>
    </location>
</feature>
<feature type="strand" evidence="14">
    <location>
        <begin position="875"/>
        <end position="877"/>
    </location>
</feature>
<feature type="strand" evidence="14">
    <location>
        <begin position="879"/>
        <end position="882"/>
    </location>
</feature>
<feature type="strand" evidence="14">
    <location>
        <begin position="884"/>
        <end position="892"/>
    </location>
</feature>
<feature type="strand" evidence="14">
    <location>
        <begin position="904"/>
        <end position="913"/>
    </location>
</feature>
<feature type="helix" evidence="14">
    <location>
        <begin position="917"/>
        <end position="927"/>
    </location>
</feature>
<feature type="strand" evidence="14">
    <location>
        <begin position="934"/>
        <end position="936"/>
    </location>
</feature>
<feature type="helix" evidence="14">
    <location>
        <begin position="942"/>
        <end position="956"/>
    </location>
</feature>
<feature type="helix" evidence="14">
    <location>
        <begin position="965"/>
        <end position="968"/>
    </location>
</feature>
<organism>
    <name type="scientific">Homo sapiens</name>
    <name type="common">Human</name>
    <dbReference type="NCBI Taxonomy" id="9606"/>
    <lineage>
        <taxon>Eukaryota</taxon>
        <taxon>Metazoa</taxon>
        <taxon>Chordata</taxon>
        <taxon>Craniata</taxon>
        <taxon>Vertebrata</taxon>
        <taxon>Euteleostomi</taxon>
        <taxon>Mammalia</taxon>
        <taxon>Eutheria</taxon>
        <taxon>Euarchontoglires</taxon>
        <taxon>Primates</taxon>
        <taxon>Haplorrhini</taxon>
        <taxon>Catarrhini</taxon>
        <taxon>Hominidae</taxon>
        <taxon>Homo</taxon>
    </lineage>
</organism>
<keyword id="KW-0002">3D-structure</keyword>
<keyword id="KW-0025">Alternative splicing</keyword>
<keyword id="KW-0090">Biological rhythms</keyword>
<keyword id="KW-0963">Cytoplasm</keyword>
<keyword id="KW-0217">Developmental protein</keyword>
<keyword id="KW-0221">Differentiation</keyword>
<keyword id="KW-0255">Endonuclease</keyword>
<keyword id="KW-0378">Hydrolase</keyword>
<keyword id="KW-0469">Meiosis</keyword>
<keyword id="KW-0479">Metal-binding</keyword>
<keyword id="KW-0488">Methylation</keyword>
<keyword id="KW-0540">Nuclease</keyword>
<keyword id="KW-0896">Oogenesis</keyword>
<keyword id="KW-1267">Proteomics identification</keyword>
<keyword id="KW-1185">Reference proteome</keyword>
<keyword id="KW-0694">RNA-binding</keyword>
<keyword id="KW-0943">RNA-mediated gene silencing</keyword>
<keyword id="KW-0744">Spermatogenesis</keyword>
<keyword id="KW-0810">Translation regulation</keyword>
<name>PIWL2_HUMAN</name>
<comment type="function">
    <text evidence="2 7 8">Endoribonuclease that plays a central role during spermatogenesis by repressing transposable elements and preventing their mobilization, which is essential for the germline integrity (By similarity). Plays an essential role in meiotic differentiation of spermatocytes, germ cell differentiation and in self-renewal of spermatogonial stem cells (By similarity). Acts via the piRNA metabolic process, which mediates the repression of transposable elements during meiosis by forming complexes composed of piRNAs and Piwi proteins and govern the methylation and subsequent repression of transposons (By similarity). During piRNA biosynthesis, plays a key role in the piRNA amplification loop, also named ping-pong amplification cycle, by acting as a 'slicer-competent' piRNA endoribonuclease that cleaves primary piRNAs, which are then loaded onto 'slicer-incompetent' PIWIL4 (By similarity). PIWIL2 slicing produces a pre-miRNA intermediate, which is then processed in mature piRNAs, and as well as a 16 nucleotide by-product that is degraded (By similarity). Required for PIWIL4/MIWI2 nuclear localization and association with secondary piRNAs antisense (By similarity). Besides their function in transposable elements repression, piRNAs are probably involved in other processes during meiosis such as translation regulation (By similarity). Indirectly modulates expression of genes such as PDGFRB, SLC2A1, ITGA6, GJA7, THY1, CD9 and STRA8 (By similarity). When overexpressed, acts as an oncogene by inhibition of apoptosis and promotion of proliferation in tumors (PubMed:16377660). Represses circadian rhythms by promoting the stability and activity of core clock components BMAL1 and CLOCK by inhibiting GSK3B-mediated phosphorylation and ubiquitination-dependent degradation of these proteins (PubMed:28903391).</text>
</comment>
<comment type="cofactor">
    <cofactor evidence="3">
        <name>Mg(2+)</name>
        <dbReference type="ChEBI" id="CHEBI:18420"/>
    </cofactor>
</comment>
<comment type="subunit">
    <text evidence="2 8">Interacts with DDX4, MAEL, EIF3A, EIF4E, EIF4G, PRMT5 and WDR77 (By similarity). Associates with EIF4E- and EIF4G-containing m7G cap-binding complexes (By similarity). Interacts (when methylated on arginine residues) with TDRD1 and TDRKH/TDRD2 (By similarity). Interacts with TDRD12 (By similarity). Component of the PET complex, at least composed of EXD1, PIWIL2, TDRD12 and piRNAs (By similarity). Interacts with MOV10L1 (By similarity). Interacts with GPAT2 (By similarity). Interacts with TEX19 (By similarity). Interacts with GSK3B (By similarity). Interacts (via PIWI domain) with BMAL1 and CLOCK (PubMed:28903391). Interacts with TEX15 (By similarity).</text>
</comment>
<comment type="subcellular location">
    <subcellularLocation>
        <location evidence="2">Cytoplasm</location>
    </subcellularLocation>
    <text evidence="2">Present in chromatoid body. Probable component of the meiotic nuage, also named P granule, a germ-cell-specific organelle required to repress transposon activity during meiosis.</text>
</comment>
<comment type="alternative products">
    <event type="alternative splicing"/>
    <isoform>
        <id>Q8TC59-1</id>
        <name>1</name>
        <sequence type="displayed"/>
    </isoform>
    <isoform>
        <id>Q8TC59-2</id>
        <name>2</name>
        <sequence type="described" ref="VSP_036664"/>
    </isoform>
</comment>
<comment type="tissue specificity">
    <text evidence="7">Expressed in adult testis and in most tumors.</text>
</comment>
<comment type="PTM">
    <text evidence="2">Arginine methylation by PRMT5 is required for the interaction with Tudor domain-containing protein TDRD1 and subsequent localization to the meiotic nuage, also named P granule.</text>
</comment>
<comment type="similarity">
    <text evidence="11">Belongs to the argonaute family. Piwi subfamily.</text>
</comment>
<comment type="sequence caution" evidence="11">
    <conflict type="erroneous initiation">
        <sequence resource="EMBL-CDS" id="BAA91558"/>
    </conflict>
    <text>Truncated N-terminus.</text>
</comment>
<comment type="sequence caution" evidence="11">
    <conflict type="erroneous termination">
        <sequence resource="EMBL-CDS" id="BAB55155"/>
    </conflict>
    <text>Truncated C-terminus.</text>
</comment>
<accession>Q8TC59</accession>
<accession>A8K4S3</accession>
<accession>A8K8S5</accession>
<accession>B0AZN9</accession>
<accession>B0AZP2</accession>
<accession>B4DR22</accession>
<accession>E7ECA4</accession>
<accession>Q96SW6</accession>
<accession>Q9NW28</accession>
<gene>
    <name type="primary">PIWIL2</name>
    <name type="synonym">HILI</name>
</gene>
<proteinExistence type="evidence at protein level"/>
<dbReference type="EC" id="3.1.26.-" evidence="2"/>
<dbReference type="EMBL" id="AB079367">
    <property type="protein sequence ID" value="BAC81342.1"/>
    <property type="molecule type" value="mRNA"/>
</dbReference>
<dbReference type="EMBL" id="HQ651229">
    <property type="protein sequence ID" value="ADV17663.1"/>
    <property type="molecule type" value="mRNA"/>
</dbReference>
<dbReference type="EMBL" id="AK001213">
    <property type="protein sequence ID" value="BAA91558.1"/>
    <property type="status" value="ALT_INIT"/>
    <property type="molecule type" value="mRNA"/>
</dbReference>
<dbReference type="EMBL" id="AK027497">
    <property type="protein sequence ID" value="BAB55155.1"/>
    <property type="status" value="ALT_SEQ"/>
    <property type="molecule type" value="mRNA"/>
</dbReference>
<dbReference type="EMBL" id="AK291038">
    <property type="protein sequence ID" value="BAF83727.1"/>
    <property type="molecule type" value="mRNA"/>
</dbReference>
<dbReference type="EMBL" id="AK292440">
    <property type="protein sequence ID" value="BAF85129.1"/>
    <property type="molecule type" value="mRNA"/>
</dbReference>
<dbReference type="EMBL" id="AK299068">
    <property type="protein sequence ID" value="BAG61134.1"/>
    <property type="molecule type" value="mRNA"/>
</dbReference>
<dbReference type="EMBL" id="AK315830">
    <property type="protein sequence ID" value="BAF98721.1"/>
    <property type="molecule type" value="mRNA"/>
</dbReference>
<dbReference type="EMBL" id="AK315833">
    <property type="protein sequence ID" value="BAF98724.1"/>
    <property type="molecule type" value="mRNA"/>
</dbReference>
<dbReference type="EMBL" id="BC025995">
    <property type="protein sequence ID" value="AAH25995.1"/>
    <property type="molecule type" value="mRNA"/>
</dbReference>
<dbReference type="EMBL" id="BC111751">
    <property type="protein sequence ID" value="AAI11752.1"/>
    <property type="molecule type" value="mRNA"/>
</dbReference>
<dbReference type="CCDS" id="CCDS6029.1">
    <molecule id="Q8TC59-1"/>
</dbReference>
<dbReference type="CCDS" id="CCDS83261.1">
    <molecule id="Q8TC59-2"/>
</dbReference>
<dbReference type="RefSeq" id="NP_001129193.1">
    <molecule id="Q8TC59-1"/>
    <property type="nucleotide sequence ID" value="NM_001135721.3"/>
</dbReference>
<dbReference type="RefSeq" id="NP_001317409.1">
    <molecule id="Q8TC59-2"/>
    <property type="nucleotide sequence ID" value="NM_001330480.2"/>
</dbReference>
<dbReference type="RefSeq" id="NP_060538.2">
    <molecule id="Q8TC59-1"/>
    <property type="nucleotide sequence ID" value="NM_018068.3"/>
</dbReference>
<dbReference type="RefSeq" id="XP_047277880.1">
    <molecule id="Q8TC59-2"/>
    <property type="nucleotide sequence ID" value="XM_047421924.1"/>
</dbReference>
<dbReference type="PDB" id="3O7X">
    <property type="method" value="X-ray"/>
    <property type="resolution" value="2.92 A"/>
    <property type="chains" value="A/B/C/D=387-525"/>
</dbReference>
<dbReference type="PDB" id="3QIR">
    <property type="method" value="X-ray"/>
    <property type="resolution" value="2.45 A"/>
    <property type="chains" value="A/B/C/D=386-533"/>
</dbReference>
<dbReference type="PDB" id="7YFX">
    <property type="method" value="EM"/>
    <property type="resolution" value="3.40 A"/>
    <property type="chains" value="A=1-973"/>
</dbReference>
<dbReference type="PDBsum" id="3O7X"/>
<dbReference type="PDBsum" id="3QIR"/>
<dbReference type="PDBsum" id="7YFX"/>
<dbReference type="EMDB" id="EMD-33800"/>
<dbReference type="SMR" id="Q8TC59"/>
<dbReference type="BioGRID" id="120431">
    <property type="interactions" value="15"/>
</dbReference>
<dbReference type="FunCoup" id="Q8TC59">
    <property type="interactions" value="140"/>
</dbReference>
<dbReference type="IntAct" id="Q8TC59">
    <property type="interactions" value="9"/>
</dbReference>
<dbReference type="STRING" id="9606.ENSP00000349208"/>
<dbReference type="GlyGen" id="Q8TC59">
    <property type="glycosylation" value="2 sites"/>
</dbReference>
<dbReference type="iPTMnet" id="Q8TC59"/>
<dbReference type="PhosphoSitePlus" id="Q8TC59"/>
<dbReference type="BioMuta" id="PIWIL2"/>
<dbReference type="DMDM" id="74730558"/>
<dbReference type="jPOST" id="Q8TC59"/>
<dbReference type="MassIVE" id="Q8TC59"/>
<dbReference type="PaxDb" id="9606-ENSP00000349208"/>
<dbReference type="PeptideAtlas" id="Q8TC59"/>
<dbReference type="ProteomicsDB" id="74093">
    <molecule id="Q8TC59-1"/>
</dbReference>
<dbReference type="ProteomicsDB" id="74094">
    <molecule id="Q8TC59-2"/>
</dbReference>
<dbReference type="Antibodypedia" id="22585">
    <property type="antibodies" value="268 antibodies from 35 providers"/>
</dbReference>
<dbReference type="DNASU" id="55124"/>
<dbReference type="Ensembl" id="ENST00000356766.11">
    <molecule id="Q8TC59-1"/>
    <property type="protein sequence ID" value="ENSP00000349208.6"/>
    <property type="gene ID" value="ENSG00000197181.12"/>
</dbReference>
<dbReference type="Ensembl" id="ENST00000454009.6">
    <molecule id="Q8TC59-1"/>
    <property type="protein sequence ID" value="ENSP00000406956.2"/>
    <property type="gene ID" value="ENSG00000197181.12"/>
</dbReference>
<dbReference type="Ensembl" id="ENST00000521356.5">
    <molecule id="Q8TC59-2"/>
    <property type="protein sequence ID" value="ENSP00000428267.1"/>
    <property type="gene ID" value="ENSG00000197181.12"/>
</dbReference>
<dbReference type="Ensembl" id="ENST00000611073.1">
    <molecule id="Q8TC59-2"/>
    <property type="protein sequence ID" value="ENSP00000478103.1"/>
    <property type="gene ID" value="ENSG00000197181.12"/>
</dbReference>
<dbReference type="GeneID" id="55124"/>
<dbReference type="KEGG" id="hsa:55124"/>
<dbReference type="MANE-Select" id="ENST00000356766.11">
    <property type="protein sequence ID" value="ENSP00000349208.6"/>
    <property type="RefSeq nucleotide sequence ID" value="NM_018068.5"/>
    <property type="RefSeq protein sequence ID" value="NP_060538.2"/>
</dbReference>
<dbReference type="UCSC" id="uc011kzf.2">
    <molecule id="Q8TC59-1"/>
    <property type="organism name" value="human"/>
</dbReference>
<dbReference type="AGR" id="HGNC:17644"/>
<dbReference type="CTD" id="55124"/>
<dbReference type="DisGeNET" id="55124"/>
<dbReference type="GeneCards" id="PIWIL2"/>
<dbReference type="HGNC" id="HGNC:17644">
    <property type="gene designation" value="PIWIL2"/>
</dbReference>
<dbReference type="HPA" id="ENSG00000197181">
    <property type="expression patterns" value="Tissue enriched (testis)"/>
</dbReference>
<dbReference type="MIM" id="610312">
    <property type="type" value="gene"/>
</dbReference>
<dbReference type="neXtProt" id="NX_Q8TC59"/>
<dbReference type="OpenTargets" id="ENSG00000197181"/>
<dbReference type="PharmGKB" id="PA38461"/>
<dbReference type="VEuPathDB" id="HostDB:ENSG00000197181"/>
<dbReference type="eggNOG" id="KOG1042">
    <property type="taxonomic scope" value="Eukaryota"/>
</dbReference>
<dbReference type="GeneTree" id="ENSGT00950000183200"/>
<dbReference type="HOGENOM" id="CLU_008813_0_0_1"/>
<dbReference type="InParanoid" id="Q8TC59"/>
<dbReference type="OMA" id="CILNTAN"/>
<dbReference type="OrthoDB" id="445936at2759"/>
<dbReference type="PAN-GO" id="Q8TC59">
    <property type="GO annotations" value="4 GO annotations based on evolutionary models"/>
</dbReference>
<dbReference type="PhylomeDB" id="Q8TC59"/>
<dbReference type="TreeFam" id="TF354206"/>
<dbReference type="PathwayCommons" id="Q8TC59"/>
<dbReference type="Reactome" id="R-HSA-5601884">
    <property type="pathway name" value="PIWI-interacting RNA (piRNA) biogenesis"/>
</dbReference>
<dbReference type="SignaLink" id="Q8TC59"/>
<dbReference type="BioGRID-ORCS" id="55124">
    <property type="hits" value="16 hits in 1149 CRISPR screens"/>
</dbReference>
<dbReference type="ChiTaRS" id="PIWIL2">
    <property type="organism name" value="human"/>
</dbReference>
<dbReference type="EvolutionaryTrace" id="Q8TC59"/>
<dbReference type="GenomeRNAi" id="55124"/>
<dbReference type="Pharos" id="Q8TC59">
    <property type="development level" value="Tbio"/>
</dbReference>
<dbReference type="PRO" id="PR:Q8TC59"/>
<dbReference type="Proteomes" id="UP000005640">
    <property type="component" value="Chromosome 8"/>
</dbReference>
<dbReference type="RNAct" id="Q8TC59">
    <property type="molecule type" value="protein"/>
</dbReference>
<dbReference type="Bgee" id="ENSG00000197181">
    <property type="expression patterns" value="Expressed in male germ line stem cell (sensu Vertebrata) in testis and 136 other cell types or tissues"/>
</dbReference>
<dbReference type="ExpressionAtlas" id="Q8TC59">
    <property type="expression patterns" value="baseline and differential"/>
</dbReference>
<dbReference type="GO" id="GO:0033391">
    <property type="term" value="C:chromatoid body"/>
    <property type="evidence" value="ECO:0000250"/>
    <property type="project" value="UniProtKB"/>
</dbReference>
<dbReference type="GO" id="GO:0005737">
    <property type="term" value="C:cytoplasm"/>
    <property type="evidence" value="ECO:0000314"/>
    <property type="project" value="UniProtKB"/>
</dbReference>
<dbReference type="GO" id="GO:0097433">
    <property type="term" value="C:dense body"/>
    <property type="evidence" value="ECO:0007669"/>
    <property type="project" value="Ensembl"/>
</dbReference>
<dbReference type="GO" id="GO:0005634">
    <property type="term" value="C:nucleus"/>
    <property type="evidence" value="ECO:0000314"/>
    <property type="project" value="UniProtKB"/>
</dbReference>
<dbReference type="GO" id="GO:0043186">
    <property type="term" value="C:P granule"/>
    <property type="evidence" value="ECO:0000250"/>
    <property type="project" value="UniProtKB"/>
</dbReference>
<dbReference type="GO" id="GO:0010370">
    <property type="term" value="C:perinucleolar chromocenter"/>
    <property type="evidence" value="ECO:0007669"/>
    <property type="project" value="Ensembl"/>
</dbReference>
<dbReference type="GO" id="GO:1990923">
    <property type="term" value="C:PET complex"/>
    <property type="evidence" value="ECO:0000250"/>
    <property type="project" value="UniProtKB"/>
</dbReference>
<dbReference type="GO" id="GO:0071546">
    <property type="term" value="C:pi-body"/>
    <property type="evidence" value="ECO:0000250"/>
    <property type="project" value="UniProtKB"/>
</dbReference>
<dbReference type="GO" id="GO:0046872">
    <property type="term" value="F:metal ion binding"/>
    <property type="evidence" value="ECO:0007669"/>
    <property type="project" value="UniProtKB-KW"/>
</dbReference>
<dbReference type="GO" id="GO:0003729">
    <property type="term" value="F:mRNA binding"/>
    <property type="evidence" value="ECO:0007669"/>
    <property type="project" value="Ensembl"/>
</dbReference>
<dbReference type="GO" id="GO:0034584">
    <property type="term" value="F:piRNA binding"/>
    <property type="evidence" value="ECO:0000314"/>
    <property type="project" value="UniProtKB"/>
</dbReference>
<dbReference type="GO" id="GO:0004521">
    <property type="term" value="F:RNA endonuclease activity"/>
    <property type="evidence" value="ECO:0000250"/>
    <property type="project" value="UniProtKB"/>
</dbReference>
<dbReference type="GO" id="GO:0030718">
    <property type="term" value="P:germ-line stem cell population maintenance"/>
    <property type="evidence" value="ECO:0000250"/>
    <property type="project" value="UniProtKB"/>
</dbReference>
<dbReference type="GO" id="GO:0051321">
    <property type="term" value="P:meiotic cell cycle"/>
    <property type="evidence" value="ECO:0007669"/>
    <property type="project" value="UniProtKB-KW"/>
</dbReference>
<dbReference type="GO" id="GO:0042754">
    <property type="term" value="P:negative regulation of circadian rhythm"/>
    <property type="evidence" value="ECO:0000315"/>
    <property type="project" value="UniProtKB"/>
</dbReference>
<dbReference type="GO" id="GO:0048477">
    <property type="term" value="P:oogenesis"/>
    <property type="evidence" value="ECO:0000250"/>
    <property type="project" value="UniProtKB"/>
</dbReference>
<dbReference type="GO" id="GO:0034587">
    <property type="term" value="P:piRNA processing"/>
    <property type="evidence" value="ECO:0000318"/>
    <property type="project" value="GO_Central"/>
</dbReference>
<dbReference type="GO" id="GO:0140991">
    <property type="term" value="P:piRNA-mediated gene silencing by mRNA destabilization"/>
    <property type="evidence" value="ECO:0007669"/>
    <property type="project" value="Ensembl"/>
</dbReference>
<dbReference type="GO" id="GO:2000767">
    <property type="term" value="P:positive regulation of cytoplasmic translation"/>
    <property type="evidence" value="ECO:0000250"/>
    <property type="project" value="UniProtKB"/>
</dbReference>
<dbReference type="GO" id="GO:0060903">
    <property type="term" value="P:positive regulation of meiosis I"/>
    <property type="evidence" value="ECO:0007669"/>
    <property type="project" value="Ensembl"/>
</dbReference>
<dbReference type="GO" id="GO:0031047">
    <property type="term" value="P:regulatory ncRNA-mediated gene silencing"/>
    <property type="evidence" value="ECO:0000250"/>
    <property type="project" value="UniProtKB"/>
</dbReference>
<dbReference type="GO" id="GO:0048511">
    <property type="term" value="P:rhythmic process"/>
    <property type="evidence" value="ECO:0007669"/>
    <property type="project" value="UniProtKB-KW"/>
</dbReference>
<dbReference type="GO" id="GO:0140965">
    <property type="term" value="P:secondary piRNA processing"/>
    <property type="evidence" value="ECO:0007669"/>
    <property type="project" value="Ensembl"/>
</dbReference>
<dbReference type="GO" id="GO:0007283">
    <property type="term" value="P:spermatogenesis"/>
    <property type="evidence" value="ECO:0000250"/>
    <property type="project" value="UniProtKB"/>
</dbReference>
<dbReference type="GO" id="GO:0141005">
    <property type="term" value="P:transposable element silencing by heterochromatin formation"/>
    <property type="evidence" value="ECO:0000250"/>
    <property type="project" value="UniProtKB"/>
</dbReference>
<dbReference type="GO" id="GO:0141008">
    <property type="term" value="P:transposable element silencing by mRNA destabilization"/>
    <property type="evidence" value="ECO:0007669"/>
    <property type="project" value="Ensembl"/>
</dbReference>
<dbReference type="GO" id="GO:0141196">
    <property type="term" value="P:transposable element silencing by piRNA-mediated DNA methylation"/>
    <property type="evidence" value="ECO:0000250"/>
    <property type="project" value="UniProtKB"/>
</dbReference>
<dbReference type="GO" id="GO:0141006">
    <property type="term" value="P:transposable element silencing by piRNA-mediated heterochromatin formation"/>
    <property type="evidence" value="ECO:0007669"/>
    <property type="project" value="Ensembl"/>
</dbReference>
<dbReference type="CDD" id="cd02845">
    <property type="entry name" value="PAZ_piwi_like"/>
    <property type="match status" value="1"/>
</dbReference>
<dbReference type="CDD" id="cd04658">
    <property type="entry name" value="Piwi_piwi-like_Euk"/>
    <property type="match status" value="1"/>
</dbReference>
<dbReference type="FunFam" id="3.40.50.2300:FF:000141">
    <property type="entry name" value="piwi-like protein 2 isoform X1"/>
    <property type="match status" value="1"/>
</dbReference>
<dbReference type="FunFam" id="3.30.420.10:FF:000014">
    <property type="entry name" value="Piwi-like RNA-mediated gene silencing 1"/>
    <property type="match status" value="1"/>
</dbReference>
<dbReference type="FunFam" id="2.170.260.10:FF:000003">
    <property type="entry name" value="Piwi-like RNA-mediated gene silencing 2"/>
    <property type="match status" value="1"/>
</dbReference>
<dbReference type="Gene3D" id="3.40.50.2300">
    <property type="match status" value="1"/>
</dbReference>
<dbReference type="Gene3D" id="2.170.260.10">
    <property type="entry name" value="paz domain"/>
    <property type="match status" value="1"/>
</dbReference>
<dbReference type="Gene3D" id="3.30.420.10">
    <property type="entry name" value="Ribonuclease H-like superfamily/Ribonuclease H"/>
    <property type="match status" value="1"/>
</dbReference>
<dbReference type="InterPro" id="IPR014811">
    <property type="entry name" value="ArgoL1"/>
</dbReference>
<dbReference type="InterPro" id="IPR003100">
    <property type="entry name" value="PAZ_dom"/>
</dbReference>
<dbReference type="InterPro" id="IPR036085">
    <property type="entry name" value="PAZ_dom_sf"/>
</dbReference>
<dbReference type="InterPro" id="IPR003165">
    <property type="entry name" value="Piwi"/>
</dbReference>
<dbReference type="InterPro" id="IPR012337">
    <property type="entry name" value="RNaseH-like_sf"/>
</dbReference>
<dbReference type="InterPro" id="IPR036397">
    <property type="entry name" value="RNaseH_sf"/>
</dbReference>
<dbReference type="PANTHER" id="PTHR22891">
    <property type="entry name" value="EUKARYOTIC TRANSLATION INITIATION FACTOR 2C"/>
    <property type="match status" value="1"/>
</dbReference>
<dbReference type="Pfam" id="PF08699">
    <property type="entry name" value="ArgoL1"/>
    <property type="match status" value="1"/>
</dbReference>
<dbReference type="Pfam" id="PF02170">
    <property type="entry name" value="PAZ"/>
    <property type="match status" value="1"/>
</dbReference>
<dbReference type="Pfam" id="PF02171">
    <property type="entry name" value="Piwi"/>
    <property type="match status" value="1"/>
</dbReference>
<dbReference type="Pfam" id="PF23278">
    <property type="entry name" value="Piwi_N"/>
    <property type="match status" value="1"/>
</dbReference>
<dbReference type="SMART" id="SM01163">
    <property type="entry name" value="DUF1785"/>
    <property type="match status" value="1"/>
</dbReference>
<dbReference type="SMART" id="SM00949">
    <property type="entry name" value="PAZ"/>
    <property type="match status" value="1"/>
</dbReference>
<dbReference type="SMART" id="SM00950">
    <property type="entry name" value="Piwi"/>
    <property type="match status" value="1"/>
</dbReference>
<dbReference type="SUPFAM" id="SSF101690">
    <property type="entry name" value="PAZ domain"/>
    <property type="match status" value="1"/>
</dbReference>
<dbReference type="SUPFAM" id="SSF53098">
    <property type="entry name" value="Ribonuclease H-like"/>
    <property type="match status" value="1"/>
</dbReference>
<dbReference type="PROSITE" id="PS50821">
    <property type="entry name" value="PAZ"/>
    <property type="match status" value="1"/>
</dbReference>
<dbReference type="PROSITE" id="PS50822">
    <property type="entry name" value="PIWI"/>
    <property type="match status" value="1"/>
</dbReference>
<protein>
    <recommendedName>
        <fullName>Piwi-like protein 2</fullName>
        <ecNumber evidence="2">3.1.26.-</ecNumber>
    </recommendedName>
    <alternativeName>
        <fullName>Cancer/testis antigen 80</fullName>
        <shortName>CT80</shortName>
    </alternativeName>
</protein>
<evidence type="ECO:0000250" key="1">
    <source>
        <dbReference type="UniProtKB" id="A8D8P8"/>
    </source>
</evidence>
<evidence type="ECO:0000250" key="2">
    <source>
        <dbReference type="UniProtKB" id="Q8CDG1"/>
    </source>
</evidence>
<evidence type="ECO:0000250" key="3">
    <source>
        <dbReference type="UniProtKB" id="Q9JMB7"/>
    </source>
</evidence>
<evidence type="ECO:0000255" key="4">
    <source>
        <dbReference type="PROSITE-ProRule" id="PRU00142"/>
    </source>
</evidence>
<evidence type="ECO:0000255" key="5">
    <source>
        <dbReference type="PROSITE-ProRule" id="PRU00150"/>
    </source>
</evidence>
<evidence type="ECO:0000256" key="6">
    <source>
        <dbReference type="SAM" id="MobiDB-lite"/>
    </source>
</evidence>
<evidence type="ECO:0000269" key="7">
    <source>
    </source>
</evidence>
<evidence type="ECO:0000269" key="8">
    <source>
    </source>
</evidence>
<evidence type="ECO:0000303" key="9">
    <source>
    </source>
</evidence>
<evidence type="ECO:0000303" key="10">
    <source ref="2"/>
</evidence>
<evidence type="ECO:0000305" key="11"/>
<evidence type="ECO:0007829" key="12">
    <source>
        <dbReference type="PDB" id="3O7X"/>
    </source>
</evidence>
<evidence type="ECO:0007829" key="13">
    <source>
        <dbReference type="PDB" id="3QIR"/>
    </source>
</evidence>
<evidence type="ECO:0007829" key="14">
    <source>
        <dbReference type="PDB" id="7YFX"/>
    </source>
</evidence>